<name>COXZ_BRUSI</name>
<reference key="1">
    <citation type="submission" date="2007-12" db="EMBL/GenBank/DDBJ databases">
        <title>Brucella suis ATCC 23445 whole genome shotgun sequencing project.</title>
        <authorList>
            <person name="Setubal J.C."/>
            <person name="Bowns C."/>
            <person name="Boyle S."/>
            <person name="Crasta O.R."/>
            <person name="Czar M.J."/>
            <person name="Dharmanolla C."/>
            <person name="Gillespie J.J."/>
            <person name="Kenyon R.W."/>
            <person name="Lu J."/>
            <person name="Mane S."/>
            <person name="Mohapatra S."/>
            <person name="Nagrani S."/>
            <person name="Purkayastha A."/>
            <person name="Rajasimha H.K."/>
            <person name="Shallom J.M."/>
            <person name="Shallom S."/>
            <person name="Shukla M."/>
            <person name="Snyder E.E."/>
            <person name="Sobral B.W."/>
            <person name="Wattam A.R."/>
            <person name="Will R."/>
            <person name="Williams K."/>
            <person name="Yoo H."/>
            <person name="Bruce D."/>
            <person name="Detter C."/>
            <person name="Munk C."/>
            <person name="Brettin T.S."/>
        </authorList>
    </citation>
    <scope>NUCLEOTIDE SEQUENCE [LARGE SCALE GENOMIC DNA]</scope>
    <source>
        <strain>ATCC 23445 / NCTC 10510</strain>
    </source>
</reference>
<gene>
    <name evidence="1" type="primary">ctaG</name>
    <name type="ordered locus">BSUIS_A0498</name>
</gene>
<dbReference type="EMBL" id="CP000911">
    <property type="protein sequence ID" value="ABY37586.1"/>
    <property type="molecule type" value="Genomic_DNA"/>
</dbReference>
<dbReference type="RefSeq" id="WP_004683133.1">
    <property type="nucleotide sequence ID" value="NC_010169.1"/>
</dbReference>
<dbReference type="SMR" id="B0CKF6"/>
<dbReference type="KEGG" id="bmt:BSUIS_A0498"/>
<dbReference type="HOGENOM" id="CLU_045000_5_0_5"/>
<dbReference type="Proteomes" id="UP000008545">
    <property type="component" value="Chromosome I"/>
</dbReference>
<dbReference type="GO" id="GO:0005886">
    <property type="term" value="C:plasma membrane"/>
    <property type="evidence" value="ECO:0007669"/>
    <property type="project" value="UniProtKB-SubCell"/>
</dbReference>
<dbReference type="GO" id="GO:0005507">
    <property type="term" value="F:copper ion binding"/>
    <property type="evidence" value="ECO:0007669"/>
    <property type="project" value="InterPro"/>
</dbReference>
<dbReference type="GO" id="GO:0008535">
    <property type="term" value="P:respiratory chain complex IV assembly"/>
    <property type="evidence" value="ECO:0007669"/>
    <property type="project" value="UniProtKB-UniRule"/>
</dbReference>
<dbReference type="FunFam" id="2.60.370.10:FF:000001">
    <property type="entry name" value="COX11 cytochrome c oxidase assembly homolog"/>
    <property type="match status" value="1"/>
</dbReference>
<dbReference type="Gene3D" id="2.60.370.10">
    <property type="entry name" value="Ctag/Cox11"/>
    <property type="match status" value="1"/>
</dbReference>
<dbReference type="HAMAP" id="MF_00155">
    <property type="entry name" value="CtaG"/>
    <property type="match status" value="1"/>
</dbReference>
<dbReference type="InterPro" id="IPR023471">
    <property type="entry name" value="CtaG/Cox11_dom_sf"/>
</dbReference>
<dbReference type="InterPro" id="IPR007533">
    <property type="entry name" value="Cyt_c_oxidase_assmbl_CtaG"/>
</dbReference>
<dbReference type="NCBIfam" id="NF003465">
    <property type="entry name" value="PRK05089.1"/>
    <property type="match status" value="1"/>
</dbReference>
<dbReference type="PANTHER" id="PTHR21320:SF3">
    <property type="entry name" value="CYTOCHROME C OXIDASE ASSEMBLY PROTEIN COX11, MITOCHONDRIAL-RELATED"/>
    <property type="match status" value="1"/>
</dbReference>
<dbReference type="PANTHER" id="PTHR21320">
    <property type="entry name" value="CYTOCHROME C OXIDASE ASSEMBLY PROTEIN COX11-RELATED"/>
    <property type="match status" value="1"/>
</dbReference>
<dbReference type="Pfam" id="PF04442">
    <property type="entry name" value="CtaG_Cox11"/>
    <property type="match status" value="1"/>
</dbReference>
<dbReference type="PIRSF" id="PIRSF005413">
    <property type="entry name" value="COX11"/>
    <property type="match status" value="1"/>
</dbReference>
<dbReference type="SUPFAM" id="SSF110111">
    <property type="entry name" value="Ctag/Cox11"/>
    <property type="match status" value="1"/>
</dbReference>
<organism>
    <name type="scientific">Brucella suis (strain ATCC 23445 / NCTC 10510)</name>
    <dbReference type="NCBI Taxonomy" id="470137"/>
    <lineage>
        <taxon>Bacteria</taxon>
        <taxon>Pseudomonadati</taxon>
        <taxon>Pseudomonadota</taxon>
        <taxon>Alphaproteobacteria</taxon>
        <taxon>Hyphomicrobiales</taxon>
        <taxon>Brucellaceae</taxon>
        <taxon>Brucella/Ochrobactrum group</taxon>
        <taxon>Brucella</taxon>
    </lineage>
</organism>
<proteinExistence type="inferred from homology"/>
<feature type="chain" id="PRO_1000076813" description="Cytochrome c oxidase assembly protein CtaG">
    <location>
        <begin position="1"/>
        <end position="201"/>
    </location>
</feature>
<feature type="topological domain" description="Cytoplasmic" evidence="1">
    <location>
        <begin position="1"/>
        <end position="13"/>
    </location>
</feature>
<feature type="transmembrane region" description="Helical; Signal-anchor for type II membrane protein" evidence="1">
    <location>
        <begin position="14"/>
        <end position="36"/>
    </location>
</feature>
<feature type="topological domain" description="Periplasmic" evidence="1">
    <location>
        <begin position="37"/>
        <end position="201"/>
    </location>
</feature>
<protein>
    <recommendedName>
        <fullName evidence="1">Cytochrome c oxidase assembly protein CtaG</fullName>
    </recommendedName>
</protein>
<sequence>MTDQGENEKKQRRSNATIAVACLSFFVCMIGAAYASVPLYRIFCQVTGYGGTTQRVEQYSDTILDKTIKVRFDANIANGLPWDFKPMQREVTVRIGETTMIKYEAHNLFGEETYGRASFNVAPGRAGAYFNKVECFCFTDNTLKPGEDLELPVVFFVDPEFVNDPDLKDVKTITLSYTFFPIDKPKPVVNAKAVGSTRNGG</sequence>
<accession>B0CKF6</accession>
<keyword id="KW-0997">Cell inner membrane</keyword>
<keyword id="KW-1003">Cell membrane</keyword>
<keyword id="KW-0186">Copper</keyword>
<keyword id="KW-0472">Membrane</keyword>
<keyword id="KW-0735">Signal-anchor</keyword>
<keyword id="KW-0812">Transmembrane</keyword>
<keyword id="KW-1133">Transmembrane helix</keyword>
<evidence type="ECO:0000255" key="1">
    <source>
        <dbReference type="HAMAP-Rule" id="MF_00155"/>
    </source>
</evidence>
<comment type="function">
    <text evidence="1">Exerts its effect at some terminal stage of cytochrome c oxidase synthesis, probably by being involved in the insertion of the copper B into subunit I.</text>
</comment>
<comment type="subcellular location">
    <subcellularLocation>
        <location evidence="1">Cell inner membrane</location>
        <topology evidence="1">Single-pass type II membrane protein</topology>
        <orientation evidence="1">Periplasmic side</orientation>
    </subcellularLocation>
</comment>
<comment type="similarity">
    <text evidence="1">Belongs to the COX11/CtaG family.</text>
</comment>